<sequence length="319" mass="36076">MLIFVKSGENMLESILKNTSEIVSIEELTELLKKEEKIAYIGFEPSGRIHMGHYLQIRKMIDLQKAGFKIVILLADLHAYLNQKGTMDEVRALGEENRKVFEAMGLVADYVYGSEFQLKDEYTIDVYKLALSTTLNRARRSMEVIAREDENPKVASVVYPLMQVNDIKHLNADVAVGGMEQRKIHMLSREILPSMGYKAPVCIHNPVLTGLDGEGKMSSSKGNFIAVDDDEATIKKKMKNAFCPMKEVSGNPVLEIAKYYLKYPATVKRPEKFGGDLVLESYEALENAFVEGLHPMDVKNLVSEQLIEILRPIREKMNK</sequence>
<gene>
    <name evidence="1" type="primary">tyrS</name>
    <name type="ordered locus">MMP0263</name>
</gene>
<reference key="1">
    <citation type="journal article" date="2004" name="J. Bacteriol.">
        <title>Complete genome sequence of the genetically tractable hydrogenotrophic methanogen Methanococcus maripaludis.</title>
        <authorList>
            <person name="Hendrickson E.L."/>
            <person name="Kaul R."/>
            <person name="Zhou Y."/>
            <person name="Bovee D."/>
            <person name="Chapman P."/>
            <person name="Chung J."/>
            <person name="Conway de Macario E."/>
            <person name="Dodsworth J.A."/>
            <person name="Gillett W."/>
            <person name="Graham D.E."/>
            <person name="Hackett M."/>
            <person name="Haydock A.K."/>
            <person name="Kang A."/>
            <person name="Land M.L."/>
            <person name="Levy R."/>
            <person name="Lie T.J."/>
            <person name="Major T.A."/>
            <person name="Moore B.C."/>
            <person name="Porat I."/>
            <person name="Palmeiri A."/>
            <person name="Rouse G."/>
            <person name="Saenphimmachak C."/>
            <person name="Soell D."/>
            <person name="Van Dien S."/>
            <person name="Wang T."/>
            <person name="Whitman W.B."/>
            <person name="Xia Q."/>
            <person name="Zhang Y."/>
            <person name="Larimer F.W."/>
            <person name="Olson M.V."/>
            <person name="Leigh J.A."/>
        </authorList>
    </citation>
    <scope>NUCLEOTIDE SEQUENCE [LARGE SCALE GENOMIC DNA]</scope>
    <source>
        <strain>DSM 14266 / JCM 13030 / NBRC 101832 / S2 / LL</strain>
    </source>
</reference>
<keyword id="KW-0030">Aminoacyl-tRNA synthetase</keyword>
<keyword id="KW-0067">ATP-binding</keyword>
<keyword id="KW-0963">Cytoplasm</keyword>
<keyword id="KW-0436">Ligase</keyword>
<keyword id="KW-0547">Nucleotide-binding</keyword>
<keyword id="KW-0648">Protein biosynthesis</keyword>
<keyword id="KW-1185">Reference proteome</keyword>
<protein>
    <recommendedName>
        <fullName evidence="1">Tyrosine--tRNA ligase</fullName>
        <ecNumber evidence="1">6.1.1.1</ecNumber>
    </recommendedName>
    <alternativeName>
        <fullName evidence="1">Tyrosyl-tRNA synthetase</fullName>
        <shortName evidence="1">TyrRS</shortName>
    </alternativeName>
</protein>
<feature type="chain" id="PRO_0000240254" description="Tyrosine--tRNA ligase">
    <location>
        <begin position="1"/>
        <end position="319"/>
    </location>
</feature>
<feature type="short sequence motif" description="'HIGH' region">
    <location>
        <begin position="45"/>
        <end position="53"/>
    </location>
</feature>
<feature type="short sequence motif" description="'KMSKS' region">
    <location>
        <begin position="216"/>
        <end position="220"/>
    </location>
</feature>
<feature type="binding site" evidence="1">
    <location>
        <position position="40"/>
    </location>
    <ligand>
        <name>L-tyrosine</name>
        <dbReference type="ChEBI" id="CHEBI:58315"/>
    </ligand>
</feature>
<feature type="binding site" evidence="1">
    <location>
        <position position="159"/>
    </location>
    <ligand>
        <name>L-tyrosine</name>
        <dbReference type="ChEBI" id="CHEBI:58315"/>
    </ligand>
</feature>
<feature type="binding site" evidence="1">
    <location>
        <position position="163"/>
    </location>
    <ligand>
        <name>L-tyrosine</name>
        <dbReference type="ChEBI" id="CHEBI:58315"/>
    </ligand>
</feature>
<feature type="binding site" evidence="1">
    <location>
        <position position="166"/>
    </location>
    <ligand>
        <name>L-tyrosine</name>
        <dbReference type="ChEBI" id="CHEBI:58315"/>
    </ligand>
</feature>
<feature type="binding site" evidence="1">
    <location>
        <position position="181"/>
    </location>
    <ligand>
        <name>L-tyrosine</name>
        <dbReference type="ChEBI" id="CHEBI:58315"/>
    </ligand>
</feature>
<feature type="binding site" evidence="1">
    <location>
        <position position="219"/>
    </location>
    <ligand>
        <name>ATP</name>
        <dbReference type="ChEBI" id="CHEBI:30616"/>
    </ligand>
</feature>
<proteinExistence type="inferred from homology"/>
<name>SYY_METMP</name>
<accession>Q6M0K7</accession>
<dbReference type="EC" id="6.1.1.1" evidence="1"/>
<dbReference type="EMBL" id="BX950229">
    <property type="protein sequence ID" value="CAF29819.1"/>
    <property type="molecule type" value="Genomic_DNA"/>
</dbReference>
<dbReference type="SMR" id="Q6M0K7"/>
<dbReference type="STRING" id="267377.MMP0263"/>
<dbReference type="EnsemblBacteria" id="CAF29819">
    <property type="protein sequence ID" value="CAF29819"/>
    <property type="gene ID" value="MMP0263"/>
</dbReference>
<dbReference type="KEGG" id="mmp:MMP0263"/>
<dbReference type="PATRIC" id="fig|267377.15.peg.266"/>
<dbReference type="eggNOG" id="arCOG01886">
    <property type="taxonomic scope" value="Archaea"/>
</dbReference>
<dbReference type="HOGENOM" id="CLU_035267_0_1_2"/>
<dbReference type="Proteomes" id="UP000000590">
    <property type="component" value="Chromosome"/>
</dbReference>
<dbReference type="GO" id="GO:0005737">
    <property type="term" value="C:cytoplasm"/>
    <property type="evidence" value="ECO:0007669"/>
    <property type="project" value="UniProtKB-SubCell"/>
</dbReference>
<dbReference type="GO" id="GO:0005524">
    <property type="term" value="F:ATP binding"/>
    <property type="evidence" value="ECO:0007669"/>
    <property type="project" value="UniProtKB-UniRule"/>
</dbReference>
<dbReference type="GO" id="GO:0004831">
    <property type="term" value="F:tyrosine-tRNA ligase activity"/>
    <property type="evidence" value="ECO:0007669"/>
    <property type="project" value="UniProtKB-UniRule"/>
</dbReference>
<dbReference type="GO" id="GO:0006437">
    <property type="term" value="P:tyrosyl-tRNA aminoacylation"/>
    <property type="evidence" value="ECO:0007669"/>
    <property type="project" value="UniProtKB-UniRule"/>
</dbReference>
<dbReference type="CDD" id="cd00805">
    <property type="entry name" value="TyrRS_core"/>
    <property type="match status" value="1"/>
</dbReference>
<dbReference type="Gene3D" id="3.40.50.620">
    <property type="entry name" value="HUPs"/>
    <property type="match status" value="1"/>
</dbReference>
<dbReference type="Gene3D" id="1.10.240.10">
    <property type="entry name" value="Tyrosyl-Transfer RNA Synthetase"/>
    <property type="match status" value="1"/>
</dbReference>
<dbReference type="HAMAP" id="MF_02008">
    <property type="entry name" value="Tyr_tRNA_synth_type3"/>
    <property type="match status" value="1"/>
</dbReference>
<dbReference type="InterPro" id="IPR001412">
    <property type="entry name" value="aa-tRNA-synth_I_CS"/>
</dbReference>
<dbReference type="InterPro" id="IPR002305">
    <property type="entry name" value="aa-tRNA-synth_Ic"/>
</dbReference>
<dbReference type="InterPro" id="IPR014729">
    <property type="entry name" value="Rossmann-like_a/b/a_fold"/>
</dbReference>
<dbReference type="InterPro" id="IPR002307">
    <property type="entry name" value="Tyr-tRNA-ligase"/>
</dbReference>
<dbReference type="InterPro" id="IPR023684">
    <property type="entry name" value="Tyr-tRNA-ligase_3"/>
</dbReference>
<dbReference type="InterPro" id="IPR023617">
    <property type="entry name" value="Tyr-tRNA-ligase_arc/euk-type"/>
</dbReference>
<dbReference type="InterPro" id="IPR050489">
    <property type="entry name" value="Tyr-tRNA_synthase"/>
</dbReference>
<dbReference type="NCBIfam" id="NF006330">
    <property type="entry name" value="PRK08560.1"/>
    <property type="match status" value="1"/>
</dbReference>
<dbReference type="NCBIfam" id="TIGR00234">
    <property type="entry name" value="tyrS"/>
    <property type="match status" value="1"/>
</dbReference>
<dbReference type="PANTHER" id="PTHR46264:SF4">
    <property type="entry name" value="TYROSINE--TRNA LIGASE, CYTOPLASMIC"/>
    <property type="match status" value="1"/>
</dbReference>
<dbReference type="PANTHER" id="PTHR46264">
    <property type="entry name" value="TYROSINE-TRNA LIGASE"/>
    <property type="match status" value="1"/>
</dbReference>
<dbReference type="Pfam" id="PF00579">
    <property type="entry name" value="tRNA-synt_1b"/>
    <property type="match status" value="1"/>
</dbReference>
<dbReference type="PIRSF" id="PIRSF006588">
    <property type="entry name" value="TyrRS_arch_euk"/>
    <property type="match status" value="1"/>
</dbReference>
<dbReference type="PRINTS" id="PR01040">
    <property type="entry name" value="TRNASYNTHTYR"/>
</dbReference>
<dbReference type="SUPFAM" id="SSF52374">
    <property type="entry name" value="Nucleotidylyl transferase"/>
    <property type="match status" value="1"/>
</dbReference>
<dbReference type="PROSITE" id="PS00178">
    <property type="entry name" value="AA_TRNA_LIGASE_I"/>
    <property type="match status" value="1"/>
</dbReference>
<comment type="function">
    <text evidence="1">Catalyzes the attachment of tyrosine to tRNA(Tyr) in a two-step reaction: tyrosine is first activated by ATP to form Tyr-AMP and then transferred to the acceptor end of tRNA(Tyr).</text>
</comment>
<comment type="catalytic activity">
    <reaction evidence="1">
        <text>tRNA(Tyr) + L-tyrosine + ATP = L-tyrosyl-tRNA(Tyr) + AMP + diphosphate + H(+)</text>
        <dbReference type="Rhea" id="RHEA:10220"/>
        <dbReference type="Rhea" id="RHEA-COMP:9706"/>
        <dbReference type="Rhea" id="RHEA-COMP:9707"/>
        <dbReference type="ChEBI" id="CHEBI:15378"/>
        <dbReference type="ChEBI" id="CHEBI:30616"/>
        <dbReference type="ChEBI" id="CHEBI:33019"/>
        <dbReference type="ChEBI" id="CHEBI:58315"/>
        <dbReference type="ChEBI" id="CHEBI:78442"/>
        <dbReference type="ChEBI" id="CHEBI:78536"/>
        <dbReference type="ChEBI" id="CHEBI:456215"/>
        <dbReference type="EC" id="6.1.1.1"/>
    </reaction>
</comment>
<comment type="subunit">
    <text evidence="1">Homodimer.</text>
</comment>
<comment type="subcellular location">
    <subcellularLocation>
        <location evidence="1">Cytoplasm</location>
    </subcellularLocation>
</comment>
<comment type="similarity">
    <text evidence="1">Belongs to the class-I aminoacyl-tRNA synthetase family. TyrS type 3 subfamily.</text>
</comment>
<organism>
    <name type="scientific">Methanococcus maripaludis (strain DSM 14266 / JCM 13030 / NBRC 101832 / S2 / LL)</name>
    <dbReference type="NCBI Taxonomy" id="267377"/>
    <lineage>
        <taxon>Archaea</taxon>
        <taxon>Methanobacteriati</taxon>
        <taxon>Methanobacteriota</taxon>
        <taxon>Methanomada group</taxon>
        <taxon>Methanococci</taxon>
        <taxon>Methanococcales</taxon>
        <taxon>Methanococcaceae</taxon>
        <taxon>Methanococcus</taxon>
    </lineage>
</organism>
<evidence type="ECO:0000255" key="1">
    <source>
        <dbReference type="HAMAP-Rule" id="MF_02008"/>
    </source>
</evidence>